<protein>
    <recommendedName>
        <fullName evidence="1">Putative multidrug resistance protein MdtD</fullName>
    </recommendedName>
</protein>
<accession>Q1CK62</accession>
<accession>C4GRP2</accession>
<feature type="chain" id="PRO_0000268605" description="Putative multidrug resistance protein MdtD">
    <location>
        <begin position="1"/>
        <end position="465"/>
    </location>
</feature>
<feature type="transmembrane region" description="Helical" evidence="1">
    <location>
        <begin position="12"/>
        <end position="32"/>
    </location>
</feature>
<feature type="transmembrane region" description="Helical" evidence="1">
    <location>
        <begin position="49"/>
        <end position="69"/>
    </location>
</feature>
<feature type="transmembrane region" description="Helical" evidence="1">
    <location>
        <begin position="72"/>
        <end position="92"/>
    </location>
</feature>
<feature type="transmembrane region" description="Helical" evidence="1">
    <location>
        <begin position="102"/>
        <end position="124"/>
    </location>
</feature>
<feature type="transmembrane region" description="Helical" evidence="1">
    <location>
        <begin position="138"/>
        <end position="158"/>
    </location>
</feature>
<feature type="transmembrane region" description="Helical" evidence="1">
    <location>
        <begin position="165"/>
        <end position="185"/>
    </location>
</feature>
<feature type="transmembrane region" description="Helical" evidence="1">
    <location>
        <begin position="195"/>
        <end position="215"/>
    </location>
</feature>
<feature type="transmembrane region" description="Helical" evidence="1">
    <location>
        <begin position="219"/>
        <end position="239"/>
    </location>
</feature>
<feature type="transmembrane region" description="Helical" evidence="1">
    <location>
        <begin position="267"/>
        <end position="287"/>
    </location>
</feature>
<feature type="transmembrane region" description="Helical" evidence="1">
    <location>
        <begin position="290"/>
        <end position="310"/>
    </location>
</feature>
<feature type="transmembrane region" description="Helical" evidence="1">
    <location>
        <begin position="342"/>
        <end position="362"/>
    </location>
</feature>
<feature type="transmembrane region" description="Helical" evidence="1">
    <location>
        <begin position="393"/>
        <end position="413"/>
    </location>
</feature>
<feature type="transmembrane region" description="Helical" evidence="1">
    <location>
        <begin position="430"/>
        <end position="450"/>
    </location>
</feature>
<comment type="subcellular location">
    <subcellularLocation>
        <location evidence="1">Cell inner membrane</location>
        <topology evidence="1">Multi-pass membrane protein</topology>
    </subcellularLocation>
</comment>
<comment type="similarity">
    <text evidence="1">Belongs to the major facilitator superfamily. TCR/Tet family.</text>
</comment>
<organism>
    <name type="scientific">Yersinia pestis bv. Antiqua (strain Nepal516)</name>
    <dbReference type="NCBI Taxonomy" id="377628"/>
    <lineage>
        <taxon>Bacteria</taxon>
        <taxon>Pseudomonadati</taxon>
        <taxon>Pseudomonadota</taxon>
        <taxon>Gammaproteobacteria</taxon>
        <taxon>Enterobacterales</taxon>
        <taxon>Yersiniaceae</taxon>
        <taxon>Yersinia</taxon>
    </lineage>
</organism>
<name>MDTD_YERPN</name>
<gene>
    <name evidence="1" type="primary">mdtD</name>
    <name type="ordered locus">YPN_1288</name>
    <name type="ORF">YP516_1418</name>
</gene>
<reference key="1">
    <citation type="journal article" date="2006" name="J. Bacteriol.">
        <title>Complete genome sequence of Yersinia pestis strains Antiqua and Nepal516: evidence of gene reduction in an emerging pathogen.</title>
        <authorList>
            <person name="Chain P.S.G."/>
            <person name="Hu P."/>
            <person name="Malfatti S.A."/>
            <person name="Radnedge L."/>
            <person name="Larimer F."/>
            <person name="Vergez L.M."/>
            <person name="Worsham P."/>
            <person name="Chu M.C."/>
            <person name="Andersen G.L."/>
        </authorList>
    </citation>
    <scope>NUCLEOTIDE SEQUENCE [LARGE SCALE GENOMIC DNA]</scope>
    <source>
        <strain>Nepal516</strain>
    </source>
</reference>
<reference key="2">
    <citation type="submission" date="2009-04" db="EMBL/GenBank/DDBJ databases">
        <title>Yersinia pestis Nepal516A whole genome shotgun sequencing project.</title>
        <authorList>
            <person name="Plunkett G. III"/>
            <person name="Anderson B.D."/>
            <person name="Baumler D.J."/>
            <person name="Burland V."/>
            <person name="Cabot E.L."/>
            <person name="Glasner J.D."/>
            <person name="Mau B."/>
            <person name="Neeno-Eckwall E."/>
            <person name="Perna N.T."/>
            <person name="Munk A.C."/>
            <person name="Tapia R."/>
            <person name="Green L.D."/>
            <person name="Rogers Y.C."/>
            <person name="Detter J.C."/>
            <person name="Bruce D.C."/>
            <person name="Brettin T.S."/>
        </authorList>
    </citation>
    <scope>NUCLEOTIDE SEQUENCE [LARGE SCALE GENOMIC DNA]</scope>
    <source>
        <strain>Nepal516</strain>
    </source>
</reference>
<proteinExistence type="inferred from homology"/>
<dbReference type="EMBL" id="CP000305">
    <property type="protein sequence ID" value="ABG17618.1"/>
    <property type="molecule type" value="Genomic_DNA"/>
</dbReference>
<dbReference type="EMBL" id="ACNQ01000008">
    <property type="protein sequence ID" value="EEO77733.1"/>
    <property type="molecule type" value="Genomic_DNA"/>
</dbReference>
<dbReference type="RefSeq" id="WP_002209795.1">
    <property type="nucleotide sequence ID" value="NZ_ACNQ01000008.1"/>
</dbReference>
<dbReference type="SMR" id="Q1CK62"/>
<dbReference type="KEGG" id="ypn:YPN_1288"/>
<dbReference type="HOGENOM" id="CLU_000960_28_0_6"/>
<dbReference type="Proteomes" id="UP000008936">
    <property type="component" value="Chromosome"/>
</dbReference>
<dbReference type="GO" id="GO:0005886">
    <property type="term" value="C:plasma membrane"/>
    <property type="evidence" value="ECO:0007669"/>
    <property type="project" value="UniProtKB-SubCell"/>
</dbReference>
<dbReference type="GO" id="GO:0022857">
    <property type="term" value="F:transmembrane transporter activity"/>
    <property type="evidence" value="ECO:0007669"/>
    <property type="project" value="UniProtKB-UniRule"/>
</dbReference>
<dbReference type="CDD" id="cd17503">
    <property type="entry name" value="MFS_LmrB_MDR_like"/>
    <property type="match status" value="1"/>
</dbReference>
<dbReference type="FunFam" id="1.20.1250.20:FF:000021">
    <property type="entry name" value="Putative multidrug resistance protein MdtD"/>
    <property type="match status" value="1"/>
</dbReference>
<dbReference type="FunFam" id="1.20.1720.10:FF:000001">
    <property type="entry name" value="Putative multidrug resistance protein MdtD"/>
    <property type="match status" value="1"/>
</dbReference>
<dbReference type="Gene3D" id="1.20.1250.20">
    <property type="entry name" value="MFS general substrate transporter like domains"/>
    <property type="match status" value="1"/>
</dbReference>
<dbReference type="Gene3D" id="1.20.1720.10">
    <property type="entry name" value="Multidrug resistance protein D"/>
    <property type="match status" value="1"/>
</dbReference>
<dbReference type="HAMAP" id="MF_01577">
    <property type="entry name" value="MFS_MdtD"/>
    <property type="match status" value="1"/>
</dbReference>
<dbReference type="InterPro" id="IPR004638">
    <property type="entry name" value="EmrB-like"/>
</dbReference>
<dbReference type="InterPro" id="IPR011701">
    <property type="entry name" value="MFS"/>
</dbReference>
<dbReference type="InterPro" id="IPR020846">
    <property type="entry name" value="MFS_dom"/>
</dbReference>
<dbReference type="InterPro" id="IPR036259">
    <property type="entry name" value="MFS_trans_sf"/>
</dbReference>
<dbReference type="InterPro" id="IPR023721">
    <property type="entry name" value="Multi-R_MdtD"/>
</dbReference>
<dbReference type="NCBIfam" id="TIGR00711">
    <property type="entry name" value="efflux_EmrB"/>
    <property type="match status" value="1"/>
</dbReference>
<dbReference type="NCBIfam" id="NF007799">
    <property type="entry name" value="PRK10504.1"/>
    <property type="match status" value="1"/>
</dbReference>
<dbReference type="PANTHER" id="PTHR42718:SF46">
    <property type="entry name" value="BLR6921 PROTEIN"/>
    <property type="match status" value="1"/>
</dbReference>
<dbReference type="PANTHER" id="PTHR42718">
    <property type="entry name" value="MAJOR FACILITATOR SUPERFAMILY MULTIDRUG TRANSPORTER MFSC"/>
    <property type="match status" value="1"/>
</dbReference>
<dbReference type="Pfam" id="PF07690">
    <property type="entry name" value="MFS_1"/>
    <property type="match status" value="1"/>
</dbReference>
<dbReference type="PRINTS" id="PR01036">
    <property type="entry name" value="TCRTETB"/>
</dbReference>
<dbReference type="SUPFAM" id="SSF103473">
    <property type="entry name" value="MFS general substrate transporter"/>
    <property type="match status" value="1"/>
</dbReference>
<dbReference type="PROSITE" id="PS50850">
    <property type="entry name" value="MFS"/>
    <property type="match status" value="1"/>
</dbReference>
<evidence type="ECO:0000255" key="1">
    <source>
        <dbReference type="HAMAP-Rule" id="MF_01577"/>
    </source>
</evidence>
<sequence>MVTQATSVRWQLWIVAFGFFMQTLDTTIVNTALPSIAASLGENPLRMQSVIVSYVLTVAVMLPASGWLADRIGVKWVFFSAIILFTFGSLMCAQSATLNELILSRVLQGVGGAMMVPVGRLTVMKIVPREQYMAAMAFVTLPGQIGPLVGPALGGFLVEFASWHWIFLINLPVGVIGALATLLLMPNHKMSTRRFDISGFIMLAIGMATLTLALDGHTGLGLSPLAIAGLILCGVIALGSYWWHALGNRFALFSLHLFKNKIYTLGLVGSMSARIGSGMLPFMTPIFLQIGLGFSPFHAGLMMIPMIIGSMGMKRIIVQVVNRFGYRRVLVNATLLLAVVSLSLPLVAIMGWTLLMPVVLFFQGMLNALRFSTMNTLTLKTLPDRLASSGNSLLSMAMQLSMSIGVSTAGILLGTFAHHQVATNTPATHSAFLYSYLCMAIIIALPALIFNRVPPDTGANRHLAR</sequence>
<keyword id="KW-0997">Cell inner membrane</keyword>
<keyword id="KW-1003">Cell membrane</keyword>
<keyword id="KW-0472">Membrane</keyword>
<keyword id="KW-0812">Transmembrane</keyword>
<keyword id="KW-1133">Transmembrane helix</keyword>
<keyword id="KW-0813">Transport</keyword>